<keyword id="KW-1185">Reference proteome</keyword>
<feature type="chain" id="PRO_0000410517" description="Transmembrane protein 033R">
    <location>
        <begin position="1"/>
        <end position="63"/>
    </location>
</feature>
<organismHost>
    <name type="scientific">Dryophytes versicolor</name>
    <name type="common">chameleon treefrog</name>
    <dbReference type="NCBI Taxonomy" id="30343"/>
</organismHost>
<organismHost>
    <name type="scientific">Lithobates pipiens</name>
    <name type="common">Northern leopard frog</name>
    <name type="synonym">Rana pipiens</name>
    <dbReference type="NCBI Taxonomy" id="8404"/>
</organismHost>
<organismHost>
    <name type="scientific">Lithobates sylvaticus</name>
    <name type="common">Wood frog</name>
    <name type="synonym">Rana sylvatica</name>
    <dbReference type="NCBI Taxonomy" id="45438"/>
</organismHost>
<organismHost>
    <name type="scientific">Notophthalmus viridescens</name>
    <name type="common">Eastern newt</name>
    <name type="synonym">Triturus viridescens</name>
    <dbReference type="NCBI Taxonomy" id="8316"/>
</organismHost>
<sequence>MSGIQLDKETILKYSSAALVALSAVVAVMMVSNNSESWKPILVGAVVAASGAAAYQSWWPKQS</sequence>
<protein>
    <recommendedName>
        <fullName>Transmembrane protein 033R</fullName>
    </recommendedName>
</protein>
<gene>
    <name type="ORF">FV3-033R</name>
</gene>
<organism>
    <name type="scientific">Frog virus 3 (isolate Goorha)</name>
    <name type="common">FV-3</name>
    <dbReference type="NCBI Taxonomy" id="654924"/>
    <lineage>
        <taxon>Viruses</taxon>
        <taxon>Varidnaviria</taxon>
        <taxon>Bamfordvirae</taxon>
        <taxon>Nucleocytoviricota</taxon>
        <taxon>Megaviricetes</taxon>
        <taxon>Pimascovirales</taxon>
        <taxon>Iridoviridae</taxon>
        <taxon>Alphairidovirinae</taxon>
        <taxon>Ranavirus</taxon>
        <taxon>Frog virus 3</taxon>
    </lineage>
</organism>
<proteinExistence type="predicted"/>
<accession>Q6GZU3</accession>
<dbReference type="EMBL" id="AY548484">
    <property type="protein sequence ID" value="AAT09692.1"/>
    <property type="molecule type" value="Genomic_DNA"/>
</dbReference>
<dbReference type="RefSeq" id="YP_031611.1">
    <property type="nucleotide sequence ID" value="NC_005946.1"/>
</dbReference>
<dbReference type="SMR" id="Q6GZU3"/>
<dbReference type="KEGG" id="vg:2947753"/>
<dbReference type="Proteomes" id="UP000008770">
    <property type="component" value="Segment"/>
</dbReference>
<reference key="1">
    <citation type="journal article" date="2004" name="Virology">
        <title>Comparative genomic analyses of frog virus 3, type species of the genus Ranavirus (family Iridoviridae).</title>
        <authorList>
            <person name="Tan W.G."/>
            <person name="Barkman T.J."/>
            <person name="Gregory Chinchar V."/>
            <person name="Essani K."/>
        </authorList>
    </citation>
    <scope>NUCLEOTIDE SEQUENCE [LARGE SCALE GENOMIC DNA]</scope>
</reference>
<name>033R_FRG3G</name>